<sequence length="235" mass="26491">MKLGVNIDHVATLRNARGASYPDPLKAAKIAINAGADFLTVHLREDRRHIRDEDVFNLKQNISTELNLEIAATEEMLKIAKEVKPYSICIVPEKREELTTEGGLNIVNMHSKLSGIIEEMHSFDIKVSLFIDPNINQLKYLEKLERKPDIIEIHTGDYCDNPSEEKLKLITNSAEYINNLGIECHAGHGINYKHAKEIKKIPHISALNIGHSLISEAIFHGLHSVTKKMKMTISK</sequence>
<gene>
    <name evidence="1" type="primary">pdxJ</name>
    <name type="ordered locus">WP0613</name>
</gene>
<feature type="chain" id="PRO_1000114829" description="Pyridoxine 5'-phosphate synthase">
    <location>
        <begin position="1"/>
        <end position="235"/>
    </location>
</feature>
<feature type="active site" description="Proton acceptor" evidence="1">
    <location>
        <position position="42"/>
    </location>
</feature>
<feature type="active site" description="Proton acceptor" evidence="1">
    <location>
        <position position="69"/>
    </location>
</feature>
<feature type="active site" description="Proton donor" evidence="1">
    <location>
        <position position="188"/>
    </location>
</feature>
<feature type="binding site" evidence="1">
    <location>
        <position position="6"/>
    </location>
    <ligand>
        <name>3-amino-2-oxopropyl phosphate</name>
        <dbReference type="ChEBI" id="CHEBI:57279"/>
    </ligand>
</feature>
<feature type="binding site" evidence="1">
    <location>
        <begin position="8"/>
        <end position="9"/>
    </location>
    <ligand>
        <name>1-deoxy-D-xylulose 5-phosphate</name>
        <dbReference type="ChEBI" id="CHEBI:57792"/>
    </ligand>
</feature>
<feature type="binding site" evidence="1">
    <location>
        <position position="17"/>
    </location>
    <ligand>
        <name>3-amino-2-oxopropyl phosphate</name>
        <dbReference type="ChEBI" id="CHEBI:57279"/>
    </ligand>
</feature>
<feature type="binding site" evidence="1">
    <location>
        <position position="44"/>
    </location>
    <ligand>
        <name>1-deoxy-D-xylulose 5-phosphate</name>
        <dbReference type="ChEBI" id="CHEBI:57792"/>
    </ligand>
</feature>
<feature type="binding site" evidence="1">
    <location>
        <position position="49"/>
    </location>
    <ligand>
        <name>1-deoxy-D-xylulose 5-phosphate</name>
        <dbReference type="ChEBI" id="CHEBI:57792"/>
    </ligand>
</feature>
<feature type="binding site" evidence="1">
    <location>
        <position position="99"/>
    </location>
    <ligand>
        <name>1-deoxy-D-xylulose 5-phosphate</name>
        <dbReference type="ChEBI" id="CHEBI:57792"/>
    </ligand>
</feature>
<feature type="binding site" evidence="1">
    <location>
        <position position="189"/>
    </location>
    <ligand>
        <name>3-amino-2-oxopropyl phosphate</name>
        <dbReference type="ChEBI" id="CHEBI:57279"/>
    </ligand>
</feature>
<feature type="binding site" evidence="1">
    <location>
        <begin position="210"/>
        <end position="211"/>
    </location>
    <ligand>
        <name>3-amino-2-oxopropyl phosphate</name>
        <dbReference type="ChEBI" id="CHEBI:57279"/>
    </ligand>
</feature>
<feature type="site" description="Transition state stabilizer" evidence="1">
    <location>
        <position position="152"/>
    </location>
</feature>
<accession>B3CLF3</accession>
<organism>
    <name type="scientific">Wolbachia pipientis subsp. Culex pipiens (strain wPip)</name>
    <dbReference type="NCBI Taxonomy" id="570417"/>
    <lineage>
        <taxon>Bacteria</taxon>
        <taxon>Pseudomonadati</taxon>
        <taxon>Pseudomonadota</taxon>
        <taxon>Alphaproteobacteria</taxon>
        <taxon>Rickettsiales</taxon>
        <taxon>Anaplasmataceae</taxon>
        <taxon>Wolbachieae</taxon>
        <taxon>Wolbachia</taxon>
    </lineage>
</organism>
<reference key="1">
    <citation type="journal article" date="2008" name="Mol. Biol. Evol.">
        <title>Genome evolution of Wolbachia strain wPip from the Culex pipiens group.</title>
        <authorList>
            <person name="Klasson L."/>
            <person name="Walker T."/>
            <person name="Sebaihia M."/>
            <person name="Sanders M.J."/>
            <person name="Quail M.A."/>
            <person name="Lord A."/>
            <person name="Sanders S."/>
            <person name="Earl J."/>
            <person name="O'Neill S.L."/>
            <person name="Thomson N."/>
            <person name="Sinkins S.P."/>
            <person name="Parkhill J."/>
        </authorList>
    </citation>
    <scope>NUCLEOTIDE SEQUENCE [LARGE SCALE GENOMIC DNA]</scope>
    <source>
        <strain>wPip</strain>
    </source>
</reference>
<comment type="function">
    <text evidence="1">Catalyzes the complicated ring closure reaction between the two acyclic compounds 1-deoxy-D-xylulose-5-phosphate (DXP) and 3-amino-2-oxopropyl phosphate (1-amino-acetone-3-phosphate or AAP) to form pyridoxine 5'-phosphate (PNP) and inorganic phosphate.</text>
</comment>
<comment type="catalytic activity">
    <reaction evidence="1">
        <text>3-amino-2-oxopropyl phosphate + 1-deoxy-D-xylulose 5-phosphate = pyridoxine 5'-phosphate + phosphate + 2 H2O + H(+)</text>
        <dbReference type="Rhea" id="RHEA:15265"/>
        <dbReference type="ChEBI" id="CHEBI:15377"/>
        <dbReference type="ChEBI" id="CHEBI:15378"/>
        <dbReference type="ChEBI" id="CHEBI:43474"/>
        <dbReference type="ChEBI" id="CHEBI:57279"/>
        <dbReference type="ChEBI" id="CHEBI:57792"/>
        <dbReference type="ChEBI" id="CHEBI:58589"/>
        <dbReference type="EC" id="2.6.99.2"/>
    </reaction>
</comment>
<comment type="pathway">
    <text evidence="1">Cofactor biosynthesis; pyridoxine 5'-phosphate biosynthesis; pyridoxine 5'-phosphate from D-erythrose 4-phosphate: step 5/5.</text>
</comment>
<comment type="subunit">
    <text evidence="1">Homooctamer; tetramer of dimers.</text>
</comment>
<comment type="subcellular location">
    <subcellularLocation>
        <location evidence="1">Cytoplasm</location>
    </subcellularLocation>
</comment>
<comment type="similarity">
    <text evidence="1">Belongs to the PNP synthase family.</text>
</comment>
<dbReference type="EC" id="2.6.99.2" evidence="1"/>
<dbReference type="EMBL" id="AM999887">
    <property type="protein sequence ID" value="CAQ54721.1"/>
    <property type="molecule type" value="Genomic_DNA"/>
</dbReference>
<dbReference type="RefSeq" id="WP_007302038.1">
    <property type="nucleotide sequence ID" value="NC_010981.1"/>
</dbReference>
<dbReference type="SMR" id="B3CLF3"/>
<dbReference type="KEGG" id="wpi:WP0613"/>
<dbReference type="eggNOG" id="COG0854">
    <property type="taxonomic scope" value="Bacteria"/>
</dbReference>
<dbReference type="HOGENOM" id="CLU_074563_0_0_5"/>
<dbReference type="UniPathway" id="UPA00244">
    <property type="reaction ID" value="UER00313"/>
</dbReference>
<dbReference type="Proteomes" id="UP000008814">
    <property type="component" value="Chromosome"/>
</dbReference>
<dbReference type="GO" id="GO:0005829">
    <property type="term" value="C:cytosol"/>
    <property type="evidence" value="ECO:0007669"/>
    <property type="project" value="TreeGrafter"/>
</dbReference>
<dbReference type="GO" id="GO:0033856">
    <property type="term" value="F:pyridoxine 5'-phosphate synthase activity"/>
    <property type="evidence" value="ECO:0007669"/>
    <property type="project" value="UniProtKB-EC"/>
</dbReference>
<dbReference type="GO" id="GO:0008615">
    <property type="term" value="P:pyridoxine biosynthetic process"/>
    <property type="evidence" value="ECO:0007669"/>
    <property type="project" value="UniProtKB-UniRule"/>
</dbReference>
<dbReference type="CDD" id="cd00003">
    <property type="entry name" value="PNPsynthase"/>
    <property type="match status" value="1"/>
</dbReference>
<dbReference type="Gene3D" id="3.20.20.70">
    <property type="entry name" value="Aldolase class I"/>
    <property type="match status" value="1"/>
</dbReference>
<dbReference type="HAMAP" id="MF_00279">
    <property type="entry name" value="PdxJ"/>
    <property type="match status" value="1"/>
</dbReference>
<dbReference type="InterPro" id="IPR013785">
    <property type="entry name" value="Aldolase_TIM"/>
</dbReference>
<dbReference type="InterPro" id="IPR004569">
    <property type="entry name" value="PyrdxlP_synth_PdxJ"/>
</dbReference>
<dbReference type="InterPro" id="IPR036130">
    <property type="entry name" value="Pyridoxine-5'_phos_synth"/>
</dbReference>
<dbReference type="NCBIfam" id="TIGR00559">
    <property type="entry name" value="pdxJ"/>
    <property type="match status" value="1"/>
</dbReference>
<dbReference type="NCBIfam" id="NF003625">
    <property type="entry name" value="PRK05265.1-3"/>
    <property type="match status" value="1"/>
</dbReference>
<dbReference type="NCBIfam" id="NF003627">
    <property type="entry name" value="PRK05265.1-5"/>
    <property type="match status" value="1"/>
</dbReference>
<dbReference type="PANTHER" id="PTHR30456">
    <property type="entry name" value="PYRIDOXINE 5'-PHOSPHATE SYNTHASE"/>
    <property type="match status" value="1"/>
</dbReference>
<dbReference type="PANTHER" id="PTHR30456:SF0">
    <property type="entry name" value="PYRIDOXINE 5'-PHOSPHATE SYNTHASE"/>
    <property type="match status" value="1"/>
</dbReference>
<dbReference type="Pfam" id="PF03740">
    <property type="entry name" value="PdxJ"/>
    <property type="match status" value="1"/>
</dbReference>
<dbReference type="SUPFAM" id="SSF63892">
    <property type="entry name" value="Pyridoxine 5'-phosphate synthase"/>
    <property type="match status" value="1"/>
</dbReference>
<evidence type="ECO:0000255" key="1">
    <source>
        <dbReference type="HAMAP-Rule" id="MF_00279"/>
    </source>
</evidence>
<proteinExistence type="inferred from homology"/>
<keyword id="KW-0963">Cytoplasm</keyword>
<keyword id="KW-0664">Pyridoxine biosynthesis</keyword>
<keyword id="KW-0808">Transferase</keyword>
<name>PDXJ_WOLPP</name>
<protein>
    <recommendedName>
        <fullName evidence="1">Pyridoxine 5'-phosphate synthase</fullName>
        <shortName evidence="1">PNP synthase</shortName>
        <ecNumber evidence="1">2.6.99.2</ecNumber>
    </recommendedName>
</protein>